<protein>
    <recommendedName>
        <fullName evidence="1">Probable GTP-binding protein EngB</fullName>
    </recommendedName>
</protein>
<name>ENGB_YERE8</name>
<gene>
    <name evidence="1" type="primary">engB</name>
    <name type="ordered locus">YE0022</name>
</gene>
<accession>A1JHT4</accession>
<organism>
    <name type="scientific">Yersinia enterocolitica serotype O:8 / biotype 1B (strain NCTC 13174 / 8081)</name>
    <dbReference type="NCBI Taxonomy" id="393305"/>
    <lineage>
        <taxon>Bacteria</taxon>
        <taxon>Pseudomonadati</taxon>
        <taxon>Pseudomonadota</taxon>
        <taxon>Gammaproteobacteria</taxon>
        <taxon>Enterobacterales</taxon>
        <taxon>Yersiniaceae</taxon>
        <taxon>Yersinia</taxon>
    </lineage>
</organism>
<feature type="chain" id="PRO_1000005867" description="Probable GTP-binding protein EngB">
    <location>
        <begin position="1"/>
        <end position="217"/>
    </location>
</feature>
<feature type="domain" description="EngB-type G" evidence="1">
    <location>
        <begin position="27"/>
        <end position="201"/>
    </location>
</feature>
<feature type="binding site" evidence="1">
    <location>
        <begin position="35"/>
        <end position="42"/>
    </location>
    <ligand>
        <name>GTP</name>
        <dbReference type="ChEBI" id="CHEBI:37565"/>
    </ligand>
</feature>
<feature type="binding site" evidence="1">
    <location>
        <position position="42"/>
    </location>
    <ligand>
        <name>Mg(2+)</name>
        <dbReference type="ChEBI" id="CHEBI:18420"/>
    </ligand>
</feature>
<feature type="binding site" evidence="1">
    <location>
        <begin position="62"/>
        <end position="66"/>
    </location>
    <ligand>
        <name>GTP</name>
        <dbReference type="ChEBI" id="CHEBI:37565"/>
    </ligand>
</feature>
<feature type="binding site" evidence="1">
    <location>
        <position position="64"/>
    </location>
    <ligand>
        <name>Mg(2+)</name>
        <dbReference type="ChEBI" id="CHEBI:18420"/>
    </ligand>
</feature>
<feature type="binding site" evidence="1">
    <location>
        <begin position="80"/>
        <end position="83"/>
    </location>
    <ligand>
        <name>GTP</name>
        <dbReference type="ChEBI" id="CHEBI:37565"/>
    </ligand>
</feature>
<feature type="binding site" evidence="1">
    <location>
        <begin position="147"/>
        <end position="150"/>
    </location>
    <ligand>
        <name>GTP</name>
        <dbReference type="ChEBI" id="CHEBI:37565"/>
    </ligand>
</feature>
<feature type="binding site" evidence="1">
    <location>
        <begin position="180"/>
        <end position="182"/>
    </location>
    <ligand>
        <name>GTP</name>
        <dbReference type="ChEBI" id="CHEBI:37565"/>
    </ligand>
</feature>
<sequence>MTIRNFNYHMTHFVISAPDIRHLPRDEGIEVAFAGRSNAGKSSALNTLTGQKSLARTSKTPGRTQLINLFEVVEGVRLVDLPGYGYAEVPEEMKLKWQRALGEYLQKRNCLKGLVVLMDIRHPLKDLDQQMITWAVAVGTPVMLLLTKADKLASGARKAQLNMVREAIIPFMGDIQVEAFSSLKKIGVDKLREKLDTWFSEIPPEVMIDEYDDEEGK</sequence>
<keyword id="KW-0131">Cell cycle</keyword>
<keyword id="KW-0132">Cell division</keyword>
<keyword id="KW-0342">GTP-binding</keyword>
<keyword id="KW-0460">Magnesium</keyword>
<keyword id="KW-0479">Metal-binding</keyword>
<keyword id="KW-0547">Nucleotide-binding</keyword>
<keyword id="KW-0717">Septation</keyword>
<comment type="function">
    <text evidence="1">Necessary for normal cell division and for the maintenance of normal septation.</text>
</comment>
<comment type="cofactor">
    <cofactor evidence="1">
        <name>Mg(2+)</name>
        <dbReference type="ChEBI" id="CHEBI:18420"/>
    </cofactor>
</comment>
<comment type="similarity">
    <text evidence="1">Belongs to the TRAFAC class TrmE-Era-EngA-EngB-Septin-like GTPase superfamily. EngB GTPase family.</text>
</comment>
<reference key="1">
    <citation type="journal article" date="2006" name="PLoS Genet.">
        <title>The complete genome sequence and comparative genome analysis of the high pathogenicity Yersinia enterocolitica strain 8081.</title>
        <authorList>
            <person name="Thomson N.R."/>
            <person name="Howard S."/>
            <person name="Wren B.W."/>
            <person name="Holden M.T.G."/>
            <person name="Crossman L."/>
            <person name="Challis G.L."/>
            <person name="Churcher C."/>
            <person name="Mungall K."/>
            <person name="Brooks K."/>
            <person name="Chillingworth T."/>
            <person name="Feltwell T."/>
            <person name="Abdellah Z."/>
            <person name="Hauser H."/>
            <person name="Jagels K."/>
            <person name="Maddison M."/>
            <person name="Moule S."/>
            <person name="Sanders M."/>
            <person name="Whitehead S."/>
            <person name="Quail M.A."/>
            <person name="Dougan G."/>
            <person name="Parkhill J."/>
            <person name="Prentice M.B."/>
        </authorList>
    </citation>
    <scope>NUCLEOTIDE SEQUENCE [LARGE SCALE GENOMIC DNA]</scope>
    <source>
        <strain>NCTC 13174 / 8081</strain>
    </source>
</reference>
<proteinExistence type="inferred from homology"/>
<evidence type="ECO:0000255" key="1">
    <source>
        <dbReference type="HAMAP-Rule" id="MF_00321"/>
    </source>
</evidence>
<dbReference type="EMBL" id="AM286415">
    <property type="protein sequence ID" value="CAL10167.1"/>
    <property type="molecule type" value="Genomic_DNA"/>
</dbReference>
<dbReference type="RefSeq" id="YP_001004419.1">
    <property type="nucleotide sequence ID" value="NC_008800.1"/>
</dbReference>
<dbReference type="SMR" id="A1JHT4"/>
<dbReference type="KEGG" id="yen:YE0022"/>
<dbReference type="PATRIC" id="fig|393305.7.peg.113"/>
<dbReference type="eggNOG" id="COG0218">
    <property type="taxonomic scope" value="Bacteria"/>
</dbReference>
<dbReference type="HOGENOM" id="CLU_033732_1_2_6"/>
<dbReference type="OrthoDB" id="9804921at2"/>
<dbReference type="Proteomes" id="UP000000642">
    <property type="component" value="Chromosome"/>
</dbReference>
<dbReference type="GO" id="GO:0005829">
    <property type="term" value="C:cytosol"/>
    <property type="evidence" value="ECO:0007669"/>
    <property type="project" value="TreeGrafter"/>
</dbReference>
<dbReference type="GO" id="GO:0005525">
    <property type="term" value="F:GTP binding"/>
    <property type="evidence" value="ECO:0007669"/>
    <property type="project" value="UniProtKB-UniRule"/>
</dbReference>
<dbReference type="GO" id="GO:0046872">
    <property type="term" value="F:metal ion binding"/>
    <property type="evidence" value="ECO:0007669"/>
    <property type="project" value="UniProtKB-KW"/>
</dbReference>
<dbReference type="GO" id="GO:0000917">
    <property type="term" value="P:division septum assembly"/>
    <property type="evidence" value="ECO:0007669"/>
    <property type="project" value="UniProtKB-KW"/>
</dbReference>
<dbReference type="CDD" id="cd01876">
    <property type="entry name" value="YihA_EngB"/>
    <property type="match status" value="1"/>
</dbReference>
<dbReference type="FunFam" id="3.40.50.300:FF:000098">
    <property type="entry name" value="Probable GTP-binding protein EngB"/>
    <property type="match status" value="1"/>
</dbReference>
<dbReference type="Gene3D" id="3.40.50.300">
    <property type="entry name" value="P-loop containing nucleotide triphosphate hydrolases"/>
    <property type="match status" value="1"/>
</dbReference>
<dbReference type="HAMAP" id="MF_00321">
    <property type="entry name" value="GTPase_EngB"/>
    <property type="match status" value="1"/>
</dbReference>
<dbReference type="InterPro" id="IPR030393">
    <property type="entry name" value="G_ENGB_dom"/>
</dbReference>
<dbReference type="InterPro" id="IPR006073">
    <property type="entry name" value="GTP-bd"/>
</dbReference>
<dbReference type="InterPro" id="IPR019987">
    <property type="entry name" value="GTP-bd_ribosome_bio_YsxC"/>
</dbReference>
<dbReference type="InterPro" id="IPR027417">
    <property type="entry name" value="P-loop_NTPase"/>
</dbReference>
<dbReference type="NCBIfam" id="TIGR03598">
    <property type="entry name" value="GTPase_YsxC"/>
    <property type="match status" value="1"/>
</dbReference>
<dbReference type="PANTHER" id="PTHR11649:SF13">
    <property type="entry name" value="ENGB-TYPE G DOMAIN-CONTAINING PROTEIN"/>
    <property type="match status" value="1"/>
</dbReference>
<dbReference type="PANTHER" id="PTHR11649">
    <property type="entry name" value="MSS1/TRME-RELATED GTP-BINDING PROTEIN"/>
    <property type="match status" value="1"/>
</dbReference>
<dbReference type="Pfam" id="PF01926">
    <property type="entry name" value="MMR_HSR1"/>
    <property type="match status" value="1"/>
</dbReference>
<dbReference type="SUPFAM" id="SSF52540">
    <property type="entry name" value="P-loop containing nucleoside triphosphate hydrolases"/>
    <property type="match status" value="1"/>
</dbReference>
<dbReference type="PROSITE" id="PS51706">
    <property type="entry name" value="G_ENGB"/>
    <property type="match status" value="1"/>
</dbReference>